<protein>
    <recommendedName>
        <fullName evidence="1">Ribulose bisphosphate carboxylase</fullName>
        <shortName evidence="1">RuBisCO</shortName>
        <ecNumber evidence="1">4.1.1.39</ecNumber>
    </recommendedName>
</protein>
<gene>
    <name evidence="1" type="primary">cbbM</name>
    <name type="ordered locus">Tint_1655</name>
</gene>
<sequence length="461" mass="50818">MAHDQSSRYANLDLKESDLIAGGKHILVAYKMKPKAGYDYLATAAHFAAESSTGTNVEVSTTDDFTKGVDALVYFIDEATEDMRIAYPIELFDRNVIDGRFMIVSFLTLVIGNNQGMGDVEYGKMIDFYVPERAIQMFDGPATDISNLWRILGRPIKDGGYIAGTIIKPKLGLRPEPFAQAAYQFWLGGDFIKNDEPQGNQVFAPVKKVIPLVYDAMKRAQDETGEAKLFSMNITADDYHEMCARADFALEVFGPDADKLAFLVDGYVGGPGMVTTARRQYPNQYLHYHRAGHGAITSPSSKRGYTAFVLAKMSRLQGASGIHVGTMGYGKMEGEGDDRNIAYMIERDECQGPVYFQKWYGMKPTTPIISGGMNALRLPGFFENLGHGNVINTAGGGSYGHIDSPAAGAKSLRQAYECWKAGADPIEYAKEHKEFARAFESFPGDADKLFPGWRDKLGVHK</sequence>
<evidence type="ECO:0000255" key="1">
    <source>
        <dbReference type="HAMAP-Rule" id="MF_01339"/>
    </source>
</evidence>
<evidence type="ECO:0000305" key="2"/>
<comment type="function">
    <text evidence="1">RuBisCO catalyzes two reactions: the carboxylation of D-ribulose 1,5-bisphosphate, the primary event in carbon dioxide fixation, as well as the oxidative fragmentation of the pentose substrate. Both reactions occur simultaneously and in competition at the same active site.</text>
</comment>
<comment type="catalytic activity">
    <reaction evidence="1">
        <text>2 (2R)-3-phosphoglycerate + 2 H(+) = D-ribulose 1,5-bisphosphate + CO2 + H2O</text>
        <dbReference type="Rhea" id="RHEA:23124"/>
        <dbReference type="ChEBI" id="CHEBI:15377"/>
        <dbReference type="ChEBI" id="CHEBI:15378"/>
        <dbReference type="ChEBI" id="CHEBI:16526"/>
        <dbReference type="ChEBI" id="CHEBI:57870"/>
        <dbReference type="ChEBI" id="CHEBI:58272"/>
        <dbReference type="EC" id="4.1.1.39"/>
    </reaction>
</comment>
<comment type="catalytic activity">
    <reaction evidence="1">
        <text>D-ribulose 1,5-bisphosphate + O2 = 2-phosphoglycolate + (2R)-3-phosphoglycerate + 2 H(+)</text>
        <dbReference type="Rhea" id="RHEA:36631"/>
        <dbReference type="ChEBI" id="CHEBI:15378"/>
        <dbReference type="ChEBI" id="CHEBI:15379"/>
        <dbReference type="ChEBI" id="CHEBI:57870"/>
        <dbReference type="ChEBI" id="CHEBI:58033"/>
        <dbReference type="ChEBI" id="CHEBI:58272"/>
    </reaction>
</comment>
<comment type="cofactor">
    <cofactor evidence="1">
        <name>Mg(2+)</name>
        <dbReference type="ChEBI" id="CHEBI:18420"/>
    </cofactor>
    <text evidence="1">Binds 1 Mg(2+) ion per subunit.</text>
</comment>
<comment type="subunit">
    <text evidence="1">Homodimer.</text>
</comment>
<comment type="miscellaneous">
    <text evidence="1">The basic functional RuBisCO is composed of a large chain homodimer in a 'head-to-tail' conformation. In contrast to form I RuBisCO, the form II RuBisCO are composed solely of large subunits.</text>
</comment>
<comment type="similarity">
    <text evidence="1">Belongs to the RuBisCO large chain family. Type II subfamily.</text>
</comment>
<comment type="caution">
    <text evidence="2">No expression of this protein has been seen during autotrophic and mixotrophic growth, however the protein is probably expressed under other conditions. In a related bacteria (T.neapolitanus) expression has been seen when the form I enzyme has been knocked out.</text>
</comment>
<organism>
    <name type="scientific">Thiomonas intermedia (strain K12)</name>
    <name type="common">Thiobacillus intermedius</name>
    <dbReference type="NCBI Taxonomy" id="75379"/>
    <lineage>
        <taxon>Bacteria</taxon>
        <taxon>Pseudomonadati</taxon>
        <taxon>Pseudomonadota</taxon>
        <taxon>Betaproteobacteria</taxon>
        <taxon>Burkholderiales</taxon>
        <taxon>Thiomonas</taxon>
    </lineage>
</organism>
<name>RBL2_THIK1</name>
<keyword id="KW-0113">Calvin cycle</keyword>
<keyword id="KW-0120">Carbon dioxide fixation</keyword>
<keyword id="KW-0456">Lyase</keyword>
<keyword id="KW-0460">Magnesium</keyword>
<keyword id="KW-0479">Metal-binding</keyword>
<keyword id="KW-0503">Monooxygenase</keyword>
<keyword id="KW-0560">Oxidoreductase</keyword>
<feature type="chain" id="PRO_0000062669" description="Ribulose bisphosphate carboxylase">
    <location>
        <begin position="1"/>
        <end position="461"/>
    </location>
</feature>
<feature type="active site" description="Proton acceptor" evidence="1">
    <location>
        <position position="168"/>
    </location>
</feature>
<feature type="active site" description="Proton acceptor" evidence="1">
    <location>
        <position position="289"/>
    </location>
</feature>
<feature type="binding site" description="in homodimeric partner" evidence="1">
    <location>
        <position position="113"/>
    </location>
    <ligand>
        <name>substrate</name>
    </ligand>
</feature>
<feature type="binding site" evidence="1">
    <location>
        <position position="170"/>
    </location>
    <ligand>
        <name>substrate</name>
    </ligand>
</feature>
<feature type="binding site" description="via carbamate group" evidence="1">
    <location>
        <position position="193"/>
    </location>
    <ligand>
        <name>Mg(2+)</name>
        <dbReference type="ChEBI" id="CHEBI:18420"/>
    </ligand>
</feature>
<feature type="binding site" evidence="1">
    <location>
        <position position="195"/>
    </location>
    <ligand>
        <name>Mg(2+)</name>
        <dbReference type="ChEBI" id="CHEBI:18420"/>
    </ligand>
</feature>
<feature type="binding site" evidence="1">
    <location>
        <position position="196"/>
    </location>
    <ligand>
        <name>Mg(2+)</name>
        <dbReference type="ChEBI" id="CHEBI:18420"/>
    </ligand>
</feature>
<feature type="binding site" evidence="1">
    <location>
        <position position="290"/>
    </location>
    <ligand>
        <name>substrate</name>
    </ligand>
</feature>
<feature type="binding site" evidence="1">
    <location>
        <position position="323"/>
    </location>
    <ligand>
        <name>substrate</name>
    </ligand>
</feature>
<feature type="binding site" evidence="1">
    <location>
        <position position="370"/>
    </location>
    <ligand>
        <name>substrate</name>
    </ligand>
</feature>
<feature type="site" description="Transition state stabilizer" evidence="1">
    <location>
        <position position="331"/>
    </location>
</feature>
<feature type="modified residue" description="N6-carboxylysine" evidence="1">
    <location>
        <position position="193"/>
    </location>
</feature>
<proteinExistence type="inferred from homology"/>
<dbReference type="EC" id="4.1.1.39" evidence="1"/>
<dbReference type="EMBL" id="AF012127">
    <property type="protein sequence ID" value="AAC24964.1"/>
    <property type="molecule type" value="Genomic_DNA"/>
</dbReference>
<dbReference type="EMBL" id="CP002021">
    <property type="protein sequence ID" value="ADG31025.1"/>
    <property type="molecule type" value="Genomic_DNA"/>
</dbReference>
<dbReference type="SMR" id="O84917"/>
<dbReference type="STRING" id="75379.Tint_1655"/>
<dbReference type="KEGG" id="tin:Tint_1655"/>
<dbReference type="eggNOG" id="COG1850">
    <property type="taxonomic scope" value="Bacteria"/>
</dbReference>
<dbReference type="HOGENOM" id="CLU_031450_3_1_4"/>
<dbReference type="BioCyc" id="TINT75379:TINT_RS08290-MONOMER"/>
<dbReference type="GO" id="GO:0000287">
    <property type="term" value="F:magnesium ion binding"/>
    <property type="evidence" value="ECO:0007669"/>
    <property type="project" value="UniProtKB-UniRule"/>
</dbReference>
<dbReference type="GO" id="GO:0004497">
    <property type="term" value="F:monooxygenase activity"/>
    <property type="evidence" value="ECO:0007669"/>
    <property type="project" value="UniProtKB-KW"/>
</dbReference>
<dbReference type="GO" id="GO:0016984">
    <property type="term" value="F:ribulose-bisphosphate carboxylase activity"/>
    <property type="evidence" value="ECO:0007669"/>
    <property type="project" value="UniProtKB-UniRule"/>
</dbReference>
<dbReference type="GO" id="GO:0019253">
    <property type="term" value="P:reductive pentose-phosphate cycle"/>
    <property type="evidence" value="ECO:0007669"/>
    <property type="project" value="UniProtKB-KW"/>
</dbReference>
<dbReference type="CDD" id="cd08211">
    <property type="entry name" value="RuBisCO_large_II"/>
    <property type="match status" value="1"/>
</dbReference>
<dbReference type="Gene3D" id="3.20.20.110">
    <property type="entry name" value="Ribulose bisphosphate carboxylase, large subunit, C-terminal domain"/>
    <property type="match status" value="1"/>
</dbReference>
<dbReference type="Gene3D" id="3.30.70.150">
    <property type="entry name" value="RuBisCO large subunit, N-terminal domain"/>
    <property type="match status" value="1"/>
</dbReference>
<dbReference type="HAMAP" id="MF_01339">
    <property type="entry name" value="RuBisCO_L_type2"/>
    <property type="match status" value="1"/>
</dbReference>
<dbReference type="InterPro" id="IPR033966">
    <property type="entry name" value="RuBisCO"/>
</dbReference>
<dbReference type="InterPro" id="IPR020878">
    <property type="entry name" value="RuBisCo_large_chain_AS"/>
</dbReference>
<dbReference type="InterPro" id="IPR000685">
    <property type="entry name" value="RuBisCO_lsu_C"/>
</dbReference>
<dbReference type="InterPro" id="IPR036376">
    <property type="entry name" value="RuBisCO_lsu_C_sf"/>
</dbReference>
<dbReference type="InterPro" id="IPR017443">
    <property type="entry name" value="RuBisCO_lsu_fd_N"/>
</dbReference>
<dbReference type="InterPro" id="IPR036422">
    <property type="entry name" value="RuBisCO_lsu_N_sf"/>
</dbReference>
<dbReference type="InterPro" id="IPR020871">
    <property type="entry name" value="RuBisCO_lsuII"/>
</dbReference>
<dbReference type="NCBIfam" id="NF010002">
    <property type="entry name" value="PRK13475.1"/>
    <property type="match status" value="1"/>
</dbReference>
<dbReference type="PANTHER" id="PTHR42704">
    <property type="entry name" value="RIBULOSE BISPHOSPHATE CARBOXYLASE"/>
    <property type="match status" value="1"/>
</dbReference>
<dbReference type="PANTHER" id="PTHR42704:SF17">
    <property type="entry name" value="RIBULOSE BISPHOSPHATE CARBOXYLASE LARGE CHAIN"/>
    <property type="match status" value="1"/>
</dbReference>
<dbReference type="Pfam" id="PF00016">
    <property type="entry name" value="RuBisCO_large"/>
    <property type="match status" value="1"/>
</dbReference>
<dbReference type="Pfam" id="PF02788">
    <property type="entry name" value="RuBisCO_large_N"/>
    <property type="match status" value="1"/>
</dbReference>
<dbReference type="SUPFAM" id="SSF51649">
    <property type="entry name" value="RuBisCo, C-terminal domain"/>
    <property type="match status" value="1"/>
</dbReference>
<dbReference type="SUPFAM" id="SSF54966">
    <property type="entry name" value="RuBisCO, large subunit, small (N-terminal) domain"/>
    <property type="match status" value="1"/>
</dbReference>
<dbReference type="PROSITE" id="PS00157">
    <property type="entry name" value="RUBISCO_LARGE"/>
    <property type="match status" value="1"/>
</dbReference>
<reference key="1">
    <citation type="submission" date="1997-07" db="EMBL/GenBank/DDBJ databases">
        <title>A form II Rubisco gene and associated genes in Thiobacillus intermedius.</title>
        <authorList>
            <person name="Shively J.M."/>
            <person name="Soyer F."/>
        </authorList>
    </citation>
    <scope>NUCLEOTIDE SEQUENCE [GENOMIC DNA]</scope>
</reference>
<reference key="2">
    <citation type="submission" date="2010-04" db="EMBL/GenBank/DDBJ databases">
        <title>Complete sequence of Thiomonas intermedia K12.</title>
        <authorList>
            <consortium name="US DOE Joint Genome Institute"/>
            <person name="Lucas S."/>
            <person name="Copeland A."/>
            <person name="Lapidus A."/>
            <person name="Cheng J.-F."/>
            <person name="Bruce D."/>
            <person name="Goodwin L."/>
            <person name="Pitluck S."/>
            <person name="Davenport K."/>
            <person name="Detter J.C."/>
            <person name="Han C."/>
            <person name="Tapia R."/>
            <person name="Land M."/>
            <person name="Hauser L."/>
            <person name="Kyrpides N."/>
            <person name="Ovchinnikova G."/>
            <person name="Kerfeld C.A."/>
            <person name="Cannon G.C."/>
            <person name="Heinhorst S."/>
            <person name="Woyke T."/>
        </authorList>
    </citation>
    <scope>NUCLEOTIDE SEQUENCE [LARGE SCALE GENOMIC DNA]</scope>
    <source>
        <strain>K12</strain>
    </source>
</reference>
<reference key="3">
    <citation type="journal article" date="1993" name="FEMS Microbiol. Lett.">
        <title>Cloning and expression of the D-ribulose-1,5-bisphosphate carboxylase/oxygenase form II gene from Thiobacillus intermedius in Escherichia coli.</title>
        <authorList>
            <person name="Stoner M.T."/>
            <person name="Shively J.M."/>
        </authorList>
    </citation>
    <scope>EXPRESSION IN T.INTERMEDIUS</scope>
</reference>
<reference key="4">
    <citation type="unpublished observations" date="2005-10">
        <authorList>
            <person name="Shively J.M."/>
        </authorList>
    </citation>
    <scope>PROBABLE EXPRESSION</scope>
</reference>
<accession>O84917</accession>
<accession>D5X1M9</accession>